<accession>P9WPP7</accession>
<accession>L0TAQ4</accession>
<accession>P0A514</accession>
<accession>Q59571</accession>
<feature type="chain" id="PRO_0000052274" description="Mycocyclosin synthase">
    <location>
        <begin position="1"/>
        <end position="396"/>
    </location>
</feature>
<feature type="binding site" evidence="4 6">
    <location>
        <position position="77"/>
    </location>
    <ligand>
        <name>substrate</name>
    </ligand>
</feature>
<feature type="binding site">
    <location>
        <begin position="85"/>
        <end position="86"/>
    </location>
    <ligand>
        <name>substrate</name>
    </ligand>
</feature>
<feature type="binding site" evidence="4 6">
    <location>
        <position position="237"/>
    </location>
    <ligand>
        <name>substrate</name>
    </ligand>
</feature>
<feature type="binding site" evidence="3 4 5 6 7 8">
    <location>
        <position position="286"/>
    </location>
    <ligand>
        <name>heme</name>
        <dbReference type="ChEBI" id="CHEBI:30413"/>
    </ligand>
</feature>
<feature type="binding site" evidence="4 6">
    <location>
        <position position="301"/>
    </location>
    <ligand>
        <name>substrate</name>
    </ligand>
</feature>
<feature type="binding site" evidence="3 4 5 6 7 8">
    <location>
        <position position="343"/>
    </location>
    <ligand>
        <name>heme</name>
        <dbReference type="ChEBI" id="CHEBI:30413"/>
    </ligand>
</feature>
<feature type="binding site" description="axial binding residue">
    <location>
        <position position="345"/>
    </location>
    <ligand>
        <name>heme</name>
        <dbReference type="ChEBI" id="CHEBI:30413"/>
    </ligand>
    <ligandPart>
        <name>Fe</name>
        <dbReference type="ChEBI" id="CHEBI:18248"/>
    </ligandPart>
</feature>
<feature type="binding site" evidence="4 6">
    <location>
        <position position="385"/>
    </location>
    <ligand>
        <name>substrate</name>
    </ligand>
</feature>
<feature type="site" description="Participates in a stacking interactions with the tyrosyl of cYY">
    <location>
        <position position="168"/>
    </location>
</feature>
<feature type="site" description="Participates in a stacking interactions with the tyrosyl of cYY">
    <location>
        <position position="182"/>
    </location>
</feature>
<feature type="site" description="Important for the position of heme">
    <location>
        <position position="346"/>
    </location>
</feature>
<feature type="mutagenesis site" description="Has little effect on the heme conformation but significantly alters the environment of the heme and the affinity for azoles." evidence="5">
    <original>A</original>
    <variation>G</variation>
    <location>
        <position position="233"/>
    </location>
</feature>
<feature type="mutagenesis site" description="Has little effect on the heme conformation but significantly alters the environment of the heme and the affinity for azoles." evidence="5">
    <original>S</original>
    <variation>A</variation>
    <location>
        <position position="237"/>
    </location>
</feature>
<feature type="mutagenesis site" description="Has little effect." evidence="5">
    <original>S</original>
    <variation>A</variation>
    <location>
        <position position="279"/>
    </location>
</feature>
<feature type="mutagenesis site" description="No significant change." evidence="5">
    <original>F</original>
    <variation>H</variation>
    <location>
        <position position="338"/>
    </location>
</feature>
<feature type="mutagenesis site" description="Considerable effects on the heme macrocycle conformation. Mutant leads to a more planar heme conformation." evidence="5">
    <original>P</original>
    <variation>I</variation>
    <location>
        <position position="346"/>
    </location>
</feature>
<feature type="mutagenesis site" description="No significant change." evidence="5">
    <original>R</original>
    <variation>I</variation>
    <location>
        <position position="386"/>
    </location>
</feature>
<feature type="strand" evidence="12">
    <location>
        <begin position="7"/>
        <end position="9"/>
    </location>
</feature>
<feature type="strand" evidence="11">
    <location>
        <begin position="15"/>
        <end position="17"/>
    </location>
</feature>
<feature type="helix" evidence="11">
    <location>
        <begin position="20"/>
        <end position="28"/>
    </location>
</feature>
<feature type="strand" evidence="11">
    <location>
        <begin position="30"/>
        <end position="35"/>
    </location>
</feature>
<feature type="strand" evidence="11">
    <location>
        <begin position="41"/>
        <end position="45"/>
    </location>
</feature>
<feature type="helix" evidence="11">
    <location>
        <begin position="48"/>
        <end position="55"/>
    </location>
</feature>
<feature type="strand" evidence="11">
    <location>
        <begin position="60"/>
        <end position="62"/>
    </location>
</feature>
<feature type="helix" evidence="11">
    <location>
        <begin position="63"/>
        <end position="66"/>
    </location>
</feature>
<feature type="helix" evidence="11">
    <location>
        <begin position="80"/>
        <end position="84"/>
    </location>
</feature>
<feature type="helix" evidence="11">
    <location>
        <begin position="85"/>
        <end position="91"/>
    </location>
</feature>
<feature type="helix" evidence="11">
    <location>
        <begin position="95"/>
        <end position="101"/>
    </location>
</feature>
<feature type="helix" evidence="11">
    <location>
        <begin position="109"/>
        <end position="127"/>
    </location>
</feature>
<feature type="strand" evidence="14">
    <location>
        <begin position="129"/>
        <end position="132"/>
    </location>
</feature>
<feature type="turn" evidence="11">
    <location>
        <begin position="133"/>
        <end position="137"/>
    </location>
</feature>
<feature type="helix" evidence="11">
    <location>
        <begin position="138"/>
        <end position="150"/>
    </location>
</feature>
<feature type="helix" evidence="11">
    <location>
        <begin position="154"/>
        <end position="156"/>
    </location>
</feature>
<feature type="helix" evidence="11">
    <location>
        <begin position="157"/>
        <end position="162"/>
    </location>
</feature>
<feature type="helix" evidence="11">
    <location>
        <begin position="164"/>
        <end position="167"/>
    </location>
</feature>
<feature type="helix" evidence="11">
    <location>
        <begin position="176"/>
        <end position="194"/>
    </location>
</feature>
<feature type="helix" evidence="11">
    <location>
        <begin position="201"/>
        <end position="210"/>
    </location>
</feature>
<feature type="helix" evidence="11">
    <location>
        <begin position="213"/>
        <end position="215"/>
    </location>
</feature>
<feature type="helix" evidence="11">
    <location>
        <begin position="220"/>
        <end position="250"/>
    </location>
</feature>
<feature type="helix" evidence="11">
    <location>
        <begin position="253"/>
        <end position="261"/>
    </location>
</feature>
<feature type="helix" evidence="11">
    <location>
        <begin position="263"/>
        <end position="265"/>
    </location>
</feature>
<feature type="helix" evidence="11">
    <location>
        <begin position="266"/>
        <end position="275"/>
    </location>
</feature>
<feature type="strand" evidence="13">
    <location>
        <begin position="280"/>
        <end position="282"/>
    </location>
</feature>
<feature type="strand" evidence="11">
    <location>
        <begin position="284"/>
        <end position="290"/>
    </location>
</feature>
<feature type="strand" evidence="11">
    <location>
        <begin position="292"/>
        <end position="294"/>
    </location>
</feature>
<feature type="strand" evidence="11">
    <location>
        <begin position="297"/>
        <end position="299"/>
    </location>
</feature>
<feature type="strand" evidence="11">
    <location>
        <begin position="304"/>
        <end position="307"/>
    </location>
</feature>
<feature type="helix" evidence="11">
    <location>
        <begin position="309"/>
        <end position="313"/>
    </location>
</feature>
<feature type="turn" evidence="11">
    <location>
        <begin position="316"/>
        <end position="318"/>
    </location>
</feature>
<feature type="strand" evidence="11">
    <location>
        <begin position="319"/>
        <end position="321"/>
    </location>
</feature>
<feature type="helix" evidence="11">
    <location>
        <begin position="341"/>
        <end position="343"/>
    </location>
</feature>
<feature type="helix" evidence="11">
    <location>
        <begin position="348"/>
        <end position="365"/>
    </location>
</feature>
<feature type="strand" evidence="11">
    <location>
        <begin position="370"/>
        <end position="373"/>
    </location>
</feature>
<feature type="helix" evidence="11">
    <location>
        <begin position="375"/>
        <end position="377"/>
    </location>
</feature>
<feature type="strand" evidence="11">
    <location>
        <begin position="383"/>
        <end position="386"/>
    </location>
</feature>
<feature type="strand" evidence="11">
    <location>
        <begin position="393"/>
        <end position="395"/>
    </location>
</feature>
<dbReference type="EC" id="1.14.19.70" evidence="6"/>
<dbReference type="EMBL" id="AL123456">
    <property type="protein sequence ID" value="CCP45058.1"/>
    <property type="molecule type" value="Genomic_DNA"/>
</dbReference>
<dbReference type="PIR" id="H70730">
    <property type="entry name" value="H70730"/>
</dbReference>
<dbReference type="RefSeq" id="NP_216792.1">
    <property type="nucleotide sequence ID" value="NC_000962.3"/>
</dbReference>
<dbReference type="RefSeq" id="WP_003411685.1">
    <property type="nucleotide sequence ID" value="NZ_NVQJ01000008.1"/>
</dbReference>
<dbReference type="PDB" id="1N40">
    <property type="method" value="X-ray"/>
    <property type="resolution" value="1.06 A"/>
    <property type="chains" value="A=1-396"/>
</dbReference>
<dbReference type="PDB" id="1N4G">
    <property type="method" value="X-ray"/>
    <property type="resolution" value="1.80 A"/>
    <property type="chains" value="A=1-396"/>
</dbReference>
<dbReference type="PDB" id="2IJ5">
    <property type="method" value="X-ray"/>
    <property type="resolution" value="1.60 A"/>
    <property type="chains" value="A/B/C/D/E/F=1-396"/>
</dbReference>
<dbReference type="PDB" id="2IJ7">
    <property type="method" value="X-ray"/>
    <property type="resolution" value="1.90 A"/>
    <property type="chains" value="A/B/C/D/E/F=1-396"/>
</dbReference>
<dbReference type="PDB" id="3CXV">
    <property type="method" value="X-ray"/>
    <property type="resolution" value="1.70 A"/>
    <property type="chains" value="A=1-396"/>
</dbReference>
<dbReference type="PDB" id="3CXX">
    <property type="method" value="X-ray"/>
    <property type="resolution" value="1.90 A"/>
    <property type="chains" value="A=1-396"/>
</dbReference>
<dbReference type="PDB" id="3CXY">
    <property type="method" value="X-ray"/>
    <property type="resolution" value="1.45 A"/>
    <property type="chains" value="A=1-396"/>
</dbReference>
<dbReference type="PDB" id="3CXZ">
    <property type="method" value="X-ray"/>
    <property type="resolution" value="1.08 A"/>
    <property type="chains" value="A=1-396"/>
</dbReference>
<dbReference type="PDB" id="3CY0">
    <property type="method" value="X-ray"/>
    <property type="resolution" value="1.90 A"/>
    <property type="chains" value="A=1-396"/>
</dbReference>
<dbReference type="PDB" id="3CY1">
    <property type="method" value="X-ray"/>
    <property type="resolution" value="1.75 A"/>
    <property type="chains" value="A=1-396"/>
</dbReference>
<dbReference type="PDB" id="3G5F">
    <property type="method" value="X-ray"/>
    <property type="resolution" value="1.40 A"/>
    <property type="chains" value="A=1-396"/>
</dbReference>
<dbReference type="PDB" id="3G5H">
    <property type="method" value="X-ray"/>
    <property type="resolution" value="1.40 A"/>
    <property type="chains" value="A=1-396"/>
</dbReference>
<dbReference type="PDB" id="4G1X">
    <property type="method" value="X-ray"/>
    <property type="resolution" value="1.30 A"/>
    <property type="chains" value="A=2-396"/>
</dbReference>
<dbReference type="PDB" id="4G2G">
    <property type="method" value="X-ray"/>
    <property type="resolution" value="2.25 A"/>
    <property type="chains" value="A=2-396"/>
</dbReference>
<dbReference type="PDB" id="4G44">
    <property type="method" value="X-ray"/>
    <property type="resolution" value="1.24 A"/>
    <property type="chains" value="A=1-396"/>
</dbReference>
<dbReference type="PDB" id="4G45">
    <property type="method" value="X-ray"/>
    <property type="resolution" value="1.53 A"/>
    <property type="chains" value="A=1-396"/>
</dbReference>
<dbReference type="PDB" id="4G46">
    <property type="method" value="X-ray"/>
    <property type="resolution" value="1.52 A"/>
    <property type="chains" value="A=1-396"/>
</dbReference>
<dbReference type="PDB" id="4G47">
    <property type="method" value="X-ray"/>
    <property type="resolution" value="1.34 A"/>
    <property type="chains" value="A=1-396"/>
</dbReference>
<dbReference type="PDB" id="4G48">
    <property type="method" value="X-ray"/>
    <property type="resolution" value="1.50 A"/>
    <property type="chains" value="A=1-396"/>
</dbReference>
<dbReference type="PDB" id="4ICT">
    <property type="method" value="X-ray"/>
    <property type="resolution" value="1.80 A"/>
    <property type="chains" value="A=3-396"/>
</dbReference>
<dbReference type="PDB" id="4IPS">
    <property type="method" value="X-ray"/>
    <property type="resolution" value="1.20 A"/>
    <property type="chains" value="A=2-396"/>
</dbReference>
<dbReference type="PDB" id="4IPW">
    <property type="method" value="X-ray"/>
    <property type="resolution" value="1.40 A"/>
    <property type="chains" value="A=2-396"/>
</dbReference>
<dbReference type="PDB" id="4IQ7">
    <property type="method" value="X-ray"/>
    <property type="resolution" value="1.90 A"/>
    <property type="chains" value="A=2-396"/>
</dbReference>
<dbReference type="PDB" id="4IQ9">
    <property type="method" value="X-ray"/>
    <property type="resolution" value="1.40 A"/>
    <property type="chains" value="A=2-396"/>
</dbReference>
<dbReference type="PDB" id="5IBD">
    <property type="method" value="X-ray"/>
    <property type="resolution" value="1.77 A"/>
    <property type="chains" value="A=1-396"/>
</dbReference>
<dbReference type="PDB" id="5IBE">
    <property type="method" value="X-ray"/>
    <property type="resolution" value="1.62 A"/>
    <property type="chains" value="A=1-396"/>
</dbReference>
<dbReference type="PDB" id="5IBF">
    <property type="method" value="X-ray"/>
    <property type="resolution" value="1.70 A"/>
    <property type="chains" value="A=1-396"/>
</dbReference>
<dbReference type="PDB" id="5IBG">
    <property type="method" value="X-ray"/>
    <property type="resolution" value="2.10 A"/>
    <property type="chains" value="A=1-396"/>
</dbReference>
<dbReference type="PDB" id="5IBH">
    <property type="method" value="X-ray"/>
    <property type="resolution" value="2.02 A"/>
    <property type="chains" value="A=1-396"/>
</dbReference>
<dbReference type="PDB" id="5IBI">
    <property type="method" value="X-ray"/>
    <property type="resolution" value="2.20 A"/>
    <property type="chains" value="A=1-396"/>
</dbReference>
<dbReference type="PDB" id="5IBJ">
    <property type="method" value="X-ray"/>
    <property type="resolution" value="2.50 A"/>
    <property type="chains" value="A=1-396"/>
</dbReference>
<dbReference type="PDB" id="5O4K">
    <property type="method" value="X-ray"/>
    <property type="resolution" value="1.50 A"/>
    <property type="chains" value="A=1-396"/>
</dbReference>
<dbReference type="PDB" id="5O4L">
    <property type="method" value="X-ray"/>
    <property type="resolution" value="1.64 A"/>
    <property type="chains" value="A=1-396"/>
</dbReference>
<dbReference type="PDB" id="5OP9">
    <property type="method" value="X-ray"/>
    <property type="resolution" value="1.46 A"/>
    <property type="chains" value="A=1-396"/>
</dbReference>
<dbReference type="PDB" id="5OPA">
    <property type="method" value="X-ray"/>
    <property type="resolution" value="1.34 A"/>
    <property type="chains" value="A=1-396"/>
</dbReference>
<dbReference type="PDB" id="5WP2">
    <property type="method" value="X-ray"/>
    <property type="resolution" value="1.44 A"/>
    <property type="chains" value="A=2-396"/>
</dbReference>
<dbReference type="PDB" id="6GEO">
    <property type="method" value="X-ray"/>
    <property type="resolution" value="1.50 A"/>
    <property type="chains" value="A=1-396"/>
</dbReference>
<dbReference type="PDB" id="6GEQ">
    <property type="method" value="X-ray"/>
    <property type="resolution" value="1.60 A"/>
    <property type="chains" value="A=1-396"/>
</dbReference>
<dbReference type="PDB" id="6RQ0">
    <property type="method" value="X-ray"/>
    <property type="resolution" value="1.60 A"/>
    <property type="chains" value="A=1-396"/>
</dbReference>
<dbReference type="PDB" id="6RQ1">
    <property type="method" value="X-ray"/>
    <property type="resolution" value="1.49 A"/>
    <property type="chains" value="A=1-396"/>
</dbReference>
<dbReference type="PDB" id="6RQ3">
    <property type="method" value="X-ray"/>
    <property type="resolution" value="1.50 A"/>
    <property type="chains" value="A=1-396"/>
</dbReference>
<dbReference type="PDB" id="6RQ5">
    <property type="method" value="X-ray"/>
    <property type="resolution" value="1.55 A"/>
    <property type="chains" value="A=1-396"/>
</dbReference>
<dbReference type="PDB" id="6RQ6">
    <property type="method" value="X-ray"/>
    <property type="resolution" value="1.42 A"/>
    <property type="chains" value="A=1-396"/>
</dbReference>
<dbReference type="PDB" id="6RQ8">
    <property type="method" value="X-ray"/>
    <property type="resolution" value="1.41 A"/>
    <property type="chains" value="A=1-396"/>
</dbReference>
<dbReference type="PDB" id="6RQ9">
    <property type="method" value="X-ray"/>
    <property type="resolution" value="1.40 A"/>
    <property type="chains" value="A=1-396"/>
</dbReference>
<dbReference type="PDB" id="6RQB">
    <property type="method" value="X-ray"/>
    <property type="resolution" value="1.46 A"/>
    <property type="chains" value="A=1-396"/>
</dbReference>
<dbReference type="PDB" id="6RQD">
    <property type="method" value="X-ray"/>
    <property type="resolution" value="1.50 A"/>
    <property type="chains" value="A=1-396"/>
</dbReference>
<dbReference type="PDB" id="6RQE">
    <property type="method" value="X-ray"/>
    <property type="resolution" value="1.37 A"/>
    <property type="chains" value="A=1-396"/>
</dbReference>
<dbReference type="PDB" id="6TE7">
    <property type="method" value="X-ray"/>
    <property type="resolution" value="1.50 A"/>
    <property type="chains" value="A=1-396"/>
</dbReference>
<dbReference type="PDB" id="6TET">
    <property type="method" value="X-ray"/>
    <property type="resolution" value="1.50 A"/>
    <property type="chains" value="A=1-396"/>
</dbReference>
<dbReference type="PDB" id="6TEV">
    <property type="method" value="X-ray"/>
    <property type="resolution" value="1.70 A"/>
    <property type="chains" value="A=1-396"/>
</dbReference>
<dbReference type="PDB" id="6UPG">
    <property type="method" value="X-ray"/>
    <property type="resolution" value="1.39 A"/>
    <property type="chains" value="A=2-396"/>
</dbReference>
<dbReference type="PDB" id="6UPI">
    <property type="method" value="X-ray"/>
    <property type="resolution" value="1.81 A"/>
    <property type="chains" value="A=2-396"/>
</dbReference>
<dbReference type="PDB" id="7NQM">
    <property type="method" value="X-ray"/>
    <property type="resolution" value="1.60 A"/>
    <property type="chains" value="A=1-396"/>
</dbReference>
<dbReference type="PDB" id="7NQN">
    <property type="method" value="X-ray"/>
    <property type="resolution" value="1.60 A"/>
    <property type="chains" value="A=1-396"/>
</dbReference>
<dbReference type="PDB" id="7NQO">
    <property type="method" value="X-ray"/>
    <property type="resolution" value="1.60 A"/>
    <property type="chains" value="A=1-396"/>
</dbReference>
<dbReference type="PDB" id="8TDP">
    <property type="method" value="X-ray"/>
    <property type="resolution" value="1.85 A"/>
    <property type="chains" value="A=2-396"/>
</dbReference>
<dbReference type="PDB" id="8TDQ">
    <property type="method" value="X-ray"/>
    <property type="resolution" value="1.65 A"/>
    <property type="chains" value="A=2-396"/>
</dbReference>
<dbReference type="PDBsum" id="1N40"/>
<dbReference type="PDBsum" id="1N4G"/>
<dbReference type="PDBsum" id="2IJ5"/>
<dbReference type="PDBsum" id="2IJ7"/>
<dbReference type="PDBsum" id="3CXV"/>
<dbReference type="PDBsum" id="3CXX"/>
<dbReference type="PDBsum" id="3CXY"/>
<dbReference type="PDBsum" id="3CXZ"/>
<dbReference type="PDBsum" id="3CY0"/>
<dbReference type="PDBsum" id="3CY1"/>
<dbReference type="PDBsum" id="3G5F"/>
<dbReference type="PDBsum" id="3G5H"/>
<dbReference type="PDBsum" id="4G1X"/>
<dbReference type="PDBsum" id="4G2G"/>
<dbReference type="PDBsum" id="4G44"/>
<dbReference type="PDBsum" id="4G45"/>
<dbReference type="PDBsum" id="4G46"/>
<dbReference type="PDBsum" id="4G47"/>
<dbReference type="PDBsum" id="4G48"/>
<dbReference type="PDBsum" id="4ICT"/>
<dbReference type="PDBsum" id="4IPS"/>
<dbReference type="PDBsum" id="4IPW"/>
<dbReference type="PDBsum" id="4IQ7"/>
<dbReference type="PDBsum" id="4IQ9"/>
<dbReference type="PDBsum" id="5IBD"/>
<dbReference type="PDBsum" id="5IBE"/>
<dbReference type="PDBsum" id="5IBF"/>
<dbReference type="PDBsum" id="5IBG"/>
<dbReference type="PDBsum" id="5IBH"/>
<dbReference type="PDBsum" id="5IBI"/>
<dbReference type="PDBsum" id="5IBJ"/>
<dbReference type="PDBsum" id="5O4K"/>
<dbReference type="PDBsum" id="5O4L"/>
<dbReference type="PDBsum" id="5OP9"/>
<dbReference type="PDBsum" id="5OPA"/>
<dbReference type="PDBsum" id="5WP2"/>
<dbReference type="PDBsum" id="6GEO"/>
<dbReference type="PDBsum" id="6GEQ"/>
<dbReference type="PDBsum" id="6RQ0"/>
<dbReference type="PDBsum" id="6RQ1"/>
<dbReference type="PDBsum" id="6RQ3"/>
<dbReference type="PDBsum" id="6RQ5"/>
<dbReference type="PDBsum" id="6RQ6"/>
<dbReference type="PDBsum" id="6RQ8"/>
<dbReference type="PDBsum" id="6RQ9"/>
<dbReference type="PDBsum" id="6RQB"/>
<dbReference type="PDBsum" id="6RQD"/>
<dbReference type="PDBsum" id="6RQE"/>
<dbReference type="PDBsum" id="6TE7"/>
<dbReference type="PDBsum" id="6TET"/>
<dbReference type="PDBsum" id="6TEV"/>
<dbReference type="PDBsum" id="6UPG"/>
<dbReference type="PDBsum" id="6UPI"/>
<dbReference type="PDBsum" id="7NQM"/>
<dbReference type="PDBsum" id="7NQN"/>
<dbReference type="PDBsum" id="7NQO"/>
<dbReference type="PDBsum" id="8TDP"/>
<dbReference type="PDBsum" id="8TDQ"/>
<dbReference type="SMR" id="P9WPP7"/>
<dbReference type="FunCoup" id="P9WPP7">
    <property type="interactions" value="9"/>
</dbReference>
<dbReference type="STRING" id="83332.Rv2276"/>
<dbReference type="BindingDB" id="P9WPP7"/>
<dbReference type="ChEMBL" id="CHEMBL1681615"/>
<dbReference type="DrugBank" id="DB08761">
    <property type="generic name" value="(3S,6S)-3,6-bis(4-hydroxybenzyl)piperazine-2,5-dione"/>
</dbReference>
<dbReference type="DrugBank" id="DB02721">
    <property type="generic name" value="4-Iodopyrazole"/>
</dbReference>
<dbReference type="DrugCentral" id="P9WPP7"/>
<dbReference type="PaxDb" id="83332-Rv2276"/>
<dbReference type="DNASU" id="888373"/>
<dbReference type="GeneID" id="888373"/>
<dbReference type="KEGG" id="mtu:Rv2276"/>
<dbReference type="KEGG" id="mtv:RVBD_2276"/>
<dbReference type="TubercuList" id="Rv2276"/>
<dbReference type="eggNOG" id="COG2124">
    <property type="taxonomic scope" value="Bacteria"/>
</dbReference>
<dbReference type="InParanoid" id="P9WPP7"/>
<dbReference type="OrthoDB" id="4508142at2"/>
<dbReference type="PhylomeDB" id="P9WPP7"/>
<dbReference type="BioCyc" id="MetaCyc:G185E-6494-MONOMER"/>
<dbReference type="BRENDA" id="1.14.19.70">
    <property type="organism ID" value="3445"/>
</dbReference>
<dbReference type="BRENDA" id="1.14.21.9">
    <property type="organism ID" value="3445"/>
</dbReference>
<dbReference type="EvolutionaryTrace" id="P9WPP7"/>
<dbReference type="PRO" id="PR:P9WPP7"/>
<dbReference type="Proteomes" id="UP000001584">
    <property type="component" value="Chromosome"/>
</dbReference>
<dbReference type="GO" id="GO:0005737">
    <property type="term" value="C:cytoplasm"/>
    <property type="evidence" value="ECO:0007669"/>
    <property type="project" value="UniProtKB-SubCell"/>
</dbReference>
<dbReference type="GO" id="GO:0070025">
    <property type="term" value="F:carbon monoxide binding"/>
    <property type="evidence" value="ECO:0000314"/>
    <property type="project" value="MTBBASE"/>
</dbReference>
<dbReference type="GO" id="GO:0009975">
    <property type="term" value="F:cyclase activity"/>
    <property type="evidence" value="ECO:0000314"/>
    <property type="project" value="MTBBASE"/>
</dbReference>
<dbReference type="GO" id="GO:0020037">
    <property type="term" value="F:heme binding"/>
    <property type="evidence" value="ECO:0000314"/>
    <property type="project" value="MTBBASE"/>
</dbReference>
<dbReference type="GO" id="GO:0005506">
    <property type="term" value="F:iron ion binding"/>
    <property type="evidence" value="ECO:0007669"/>
    <property type="project" value="InterPro"/>
</dbReference>
<dbReference type="GO" id="GO:0004497">
    <property type="term" value="F:monooxygenase activity"/>
    <property type="evidence" value="ECO:0000318"/>
    <property type="project" value="GO_Central"/>
</dbReference>
<dbReference type="GO" id="GO:0016491">
    <property type="term" value="F:oxidoreductase activity"/>
    <property type="evidence" value="ECO:0000314"/>
    <property type="project" value="MTBBASE"/>
</dbReference>
<dbReference type="GO" id="GO:0016717">
    <property type="term" value="F:oxidoreductase activity, acting on paired donors, with oxidation of a pair of donors resulting in the reduction of molecular oxygen to two molecules of water"/>
    <property type="evidence" value="ECO:0000314"/>
    <property type="project" value="GO_Central"/>
</dbReference>
<dbReference type="FunFam" id="1.10.630.10:FF:000142">
    <property type="entry name" value="Mycocyclosin synthase"/>
    <property type="match status" value="1"/>
</dbReference>
<dbReference type="Gene3D" id="1.10.630.10">
    <property type="entry name" value="Cytochrome P450"/>
    <property type="match status" value="1"/>
</dbReference>
<dbReference type="InterPro" id="IPR001128">
    <property type="entry name" value="Cyt_P450"/>
</dbReference>
<dbReference type="InterPro" id="IPR002397">
    <property type="entry name" value="Cyt_P450_B"/>
</dbReference>
<dbReference type="InterPro" id="IPR017972">
    <property type="entry name" value="Cyt_P450_CS"/>
</dbReference>
<dbReference type="InterPro" id="IPR036396">
    <property type="entry name" value="Cyt_P450_sf"/>
</dbReference>
<dbReference type="PANTHER" id="PTHR46696:SF1">
    <property type="entry name" value="CYTOCHROME P450 YJIB-RELATED"/>
    <property type="match status" value="1"/>
</dbReference>
<dbReference type="PANTHER" id="PTHR46696">
    <property type="entry name" value="P450, PUTATIVE (EUROFUNG)-RELATED"/>
    <property type="match status" value="1"/>
</dbReference>
<dbReference type="Pfam" id="PF00067">
    <property type="entry name" value="p450"/>
    <property type="match status" value="1"/>
</dbReference>
<dbReference type="PRINTS" id="PR00359">
    <property type="entry name" value="BP450"/>
</dbReference>
<dbReference type="SUPFAM" id="SSF48264">
    <property type="entry name" value="Cytochrome P450"/>
    <property type="match status" value="1"/>
</dbReference>
<dbReference type="PROSITE" id="PS00086">
    <property type="entry name" value="CYTOCHROME_P450"/>
    <property type="match status" value="1"/>
</dbReference>
<name>CP121_MYCTU</name>
<proteinExistence type="evidence at protein level"/>
<sequence>MTATVLLEVPFSARGDRIPDAVAELRTREPIRKVRTITGAEAWLVSSYALCTQVLEDRRFSMKETAAAGAPRLNALTVPPEVVNNMGNIADAGLRKAVMKAITPKAPGLEQFLRDTANSLLDNLITEGAPADLRNDFADPLATALHCKVLGIPQEDGPKLFRSLSIAFMSSADPIPAAKINWDRDIEYMAGILENPNITTGLMGELSRLRKDPAYSHVSDELFATIGVTFFGAGVISTGSFLTTALISLIQRPQLRNLLHEKPELIPAGVEELLRINLSFADGLPRLATADIQVGDVLVRKGELVLVLLEGANFDPEHFPNPGSIELDRPNPTSHLAFGRGQHFCPGSALGRRHAQIGIEALLKKMPGVDLAVPIDQLVWRTRFQRRIPERLPVLW</sequence>
<keyword id="KW-0002">3D-structure</keyword>
<keyword id="KW-0963">Cytoplasm</keyword>
<keyword id="KW-0349">Heme</keyword>
<keyword id="KW-0408">Iron</keyword>
<keyword id="KW-0479">Metal-binding</keyword>
<keyword id="KW-0503">Monooxygenase</keyword>
<keyword id="KW-0560">Oxidoreductase</keyword>
<keyword id="KW-1185">Reference proteome</keyword>
<organism>
    <name type="scientific">Mycobacterium tuberculosis (strain ATCC 25618 / H37Rv)</name>
    <dbReference type="NCBI Taxonomy" id="83332"/>
    <lineage>
        <taxon>Bacteria</taxon>
        <taxon>Bacillati</taxon>
        <taxon>Actinomycetota</taxon>
        <taxon>Actinomycetes</taxon>
        <taxon>Mycobacteriales</taxon>
        <taxon>Mycobacteriaceae</taxon>
        <taxon>Mycobacterium</taxon>
        <taxon>Mycobacterium tuberculosis complex</taxon>
    </lineage>
</organism>
<gene>
    <name type="primary">cyp121</name>
    <name type="ordered locus">Rv2276</name>
    <name type="ORF">MTCY339.34c</name>
</gene>
<reference key="1">
    <citation type="journal article" date="1998" name="Nature">
        <title>Deciphering the biology of Mycobacterium tuberculosis from the complete genome sequence.</title>
        <authorList>
            <person name="Cole S.T."/>
            <person name="Brosch R."/>
            <person name="Parkhill J."/>
            <person name="Garnier T."/>
            <person name="Churcher C.M."/>
            <person name="Harris D.E."/>
            <person name="Gordon S.V."/>
            <person name="Eiglmeier K."/>
            <person name="Gas S."/>
            <person name="Barry C.E. III"/>
            <person name="Tekaia F."/>
            <person name="Badcock K."/>
            <person name="Basham D."/>
            <person name="Brown D."/>
            <person name="Chillingworth T."/>
            <person name="Connor R."/>
            <person name="Davies R.M."/>
            <person name="Devlin K."/>
            <person name="Feltwell T."/>
            <person name="Gentles S."/>
            <person name="Hamlin N."/>
            <person name="Holroyd S."/>
            <person name="Hornsby T."/>
            <person name="Jagels K."/>
            <person name="Krogh A."/>
            <person name="McLean J."/>
            <person name="Moule S."/>
            <person name="Murphy L.D."/>
            <person name="Oliver S."/>
            <person name="Osborne J."/>
            <person name="Quail M.A."/>
            <person name="Rajandream M.A."/>
            <person name="Rogers J."/>
            <person name="Rutter S."/>
            <person name="Seeger K."/>
            <person name="Skelton S."/>
            <person name="Squares S."/>
            <person name="Squares R."/>
            <person name="Sulston J.E."/>
            <person name="Taylor K."/>
            <person name="Whitehead S."/>
            <person name="Barrell B.G."/>
        </authorList>
    </citation>
    <scope>NUCLEOTIDE SEQUENCE [LARGE SCALE GENOMIC DNA]</scope>
    <source>
        <strain>ATCC 25618 / H37Rv</strain>
    </source>
</reference>
<reference key="2">
    <citation type="journal article" date="2000" name="J. Chem. Technol. Biotechnol.">
        <title>The genome sequence of Mycobacterium tuberculosis reveals cytochromes P450 as novel anti-TB drug targets.</title>
        <authorList>
            <person name="Souter A."/>
            <person name="McLean K.J."/>
            <person name="Smith W.E."/>
            <person name="Munro A.W."/>
        </authorList>
    </citation>
    <scope>FUNCTION</scope>
</reference>
<reference key="3">
    <citation type="journal article" date="2002" name="J. Inorg. Biochem.">
        <title>Expression, purification and spectroscopic characterization of the cytochrome P450 CYP121 from Mycobacterium tuberculosis.</title>
        <authorList>
            <person name="McLean K.J."/>
            <person name="Cheesman M.R."/>
            <person name="Rivers S.L."/>
            <person name="Richmond A."/>
            <person name="Leys D."/>
            <person name="Chapman S.K."/>
            <person name="Reid G.A."/>
            <person name="Price N.C."/>
            <person name="Kelly S.M."/>
            <person name="Clarkson J."/>
            <person name="Smith W.E."/>
            <person name="Munro A.W."/>
        </authorList>
    </citation>
    <scope>FUNCTION</scope>
    <scope>COFACTOR</scope>
    <scope>CIRCULAR DICHROISM ANALYSIS</scope>
    <scope>EPR SPECTROSCOPY</scope>
    <scope>MAGNETIC CIRCULAR DICHROISM</scope>
    <scope>MASS SPECTROMETRY</scope>
    <scope>RESONANCE RAMAN SPECTROSCOPY</scope>
</reference>
<reference key="4">
    <citation type="journal article" date="2002" name="Acta Crystallogr. D">
        <title>Crystallization and preliminary crystallographic analysis of a novel cytochrome P450 from Mycobacterium tuberculosis.</title>
        <authorList>
            <person name="Mowat C.G."/>
            <person name="Leys D."/>
            <person name="McLean K.J."/>
            <person name="Rivers S.L."/>
            <person name="Richmond A."/>
            <person name="Munro A.W."/>
            <person name="Ortiz Lombardia M."/>
            <person name="Alzari P.M."/>
            <person name="Reid G.A."/>
            <person name="Chapman S.K."/>
            <person name="Walkinshaw M.D."/>
        </authorList>
    </citation>
    <scope>CRYSTALLIZATION</scope>
</reference>
<reference key="5">
    <citation type="journal article" date="2008" name="BMC Syst. Biol.">
        <title>targetTB: a target identification pipeline for Mycobacterium tuberculosis through an interactome, reactome and genome-scale structural analysis.</title>
        <authorList>
            <person name="Raman K."/>
            <person name="Yeturu K."/>
            <person name="Chandra N."/>
        </authorList>
    </citation>
    <scope>IDENTIFICATION AS A DRUG TARGET [LARGE SCALE ANALYSIS]</scope>
</reference>
<reference key="6">
    <citation type="journal article" date="2011" name="Mol. Cell. Proteomics">
        <title>Proteogenomic analysis of Mycobacterium tuberculosis by high resolution mass spectrometry.</title>
        <authorList>
            <person name="Kelkar D.S."/>
            <person name="Kumar D."/>
            <person name="Kumar P."/>
            <person name="Balakrishnan L."/>
            <person name="Muthusamy B."/>
            <person name="Yadav A.K."/>
            <person name="Shrivastava P."/>
            <person name="Marimuthu A."/>
            <person name="Anand S."/>
            <person name="Sundaram H."/>
            <person name="Kingsbury R."/>
            <person name="Harsha H.C."/>
            <person name="Nair B."/>
            <person name="Prasad T.S."/>
            <person name="Chauhan D.S."/>
            <person name="Katoch K."/>
            <person name="Katoch V.M."/>
            <person name="Kumar P."/>
            <person name="Chaerkady R."/>
            <person name="Ramachandran S."/>
            <person name="Dash D."/>
            <person name="Pandey A."/>
        </authorList>
    </citation>
    <scope>IDENTIFICATION BY MASS SPECTROMETRY [LARGE SCALE ANALYSIS]</scope>
    <source>
        <strain>ATCC 25618 / H37Rv</strain>
    </source>
</reference>
<reference key="7">
    <citation type="journal article" date="2003" name="J. Biol. Chem.">
        <title>Atomic structure of Mycobacterium tuberculosis CYP121 to 1.06 A reveals novel features of cytochrome P450.</title>
        <authorList>
            <person name="Leys D."/>
            <person name="Mowat C.G."/>
            <person name="McLean K.J."/>
            <person name="Richmond A."/>
            <person name="Chapman S.K."/>
            <person name="Walkinshaw M.D."/>
            <person name="Munro A.W."/>
        </authorList>
    </citation>
    <scope>X-RAY CRYSTALLOGRAPHY (1.06 ANGSTROMS) IN COMPLEX WITH HEME</scope>
    <scope>COFACTOR</scope>
</reference>
<reference key="8">
    <citation type="journal article" date="2006" name="J. Biol. Chem.">
        <title>Crystal structure of the Mycobacterium tuberculosis P450 CYP121-fluconazole complex reveals new azole drug-P450 binding mode.</title>
        <authorList>
            <person name="Seward H.E."/>
            <person name="Roujeinikova A."/>
            <person name="McLean K.J."/>
            <person name="Munro A.W."/>
            <person name="Leys D."/>
        </authorList>
    </citation>
    <scope>X-RAY CRYSTALLOGRAPHY (1.60 ANGSTROMS) IN COMPLEX WITH HEME AND SUBSTRATE</scope>
    <scope>COFACTOR</scope>
</reference>
<reference key="9">
    <citation type="journal article" date="2008" name="J. Biol. Chem.">
        <title>Characterization of active site structure in CYP121. A cytochrome P450 essential for viability of Mycobacterium tuberculosis H37Rv.</title>
        <authorList>
            <person name="McLean K.J."/>
            <person name="Carroll P."/>
            <person name="Lewis D.G."/>
            <person name="Dunford A.J."/>
            <person name="Seward H.E."/>
            <person name="Neeli R."/>
            <person name="Cheesman M.R."/>
            <person name="Marsollier L."/>
            <person name="Douglas P."/>
            <person name="Smith W.E."/>
            <person name="Rosenkrands I."/>
            <person name="Cole S.T."/>
            <person name="Leys D."/>
            <person name="Parish T."/>
            <person name="Munro A.W."/>
        </authorList>
    </citation>
    <scope>X-RAY CRYSTALLOGRAPHY (1.08 ANGSTROMS) OF MUTANTS IN COMPLEX WITH HEME</scope>
    <scope>MUTAGENESIS OF ALA-233; SER-237; SER-279; PHE-338; PRO-346 AND ARG-386</scope>
    <scope>COFACTOR</scope>
    <scope>ACTIVITY REGULATION</scope>
</reference>
<reference key="10">
    <citation type="journal article" date="2009" name="Proc. Natl. Acad. Sci. U.S.A.">
        <title>Identification and structural basis of the reaction catalyzed by CYP121, an essential cytochrome P450 in Mycobacterium tuberculosis.</title>
        <authorList>
            <person name="Belin P."/>
            <person name="Le Du M.H."/>
            <person name="Fielding A."/>
            <person name="Lequin O."/>
            <person name="Jacquet M."/>
            <person name="Charbonnier J.B."/>
            <person name="Lecoq A."/>
            <person name="Thai R."/>
            <person name="Courcon M."/>
            <person name="Masson C."/>
            <person name="Dugave C."/>
            <person name="Genet R."/>
            <person name="Pernodet J.L."/>
            <person name="Gondry M."/>
        </authorList>
    </citation>
    <scope>X-RAY CRYSTALLOGRAPHY (1.40 ANGSTROMS) IN COMPLEX WITH HEME AND SUBSTRATE</scope>
    <scope>FUNCTION</scope>
    <scope>CATALYTIC ACTIVITY</scope>
    <scope>BIOPHYSICOCHEMICAL PROPERTIES</scope>
    <scope>REACTION MECHANISM</scope>
    <scope>COFACTOR</scope>
</reference>
<reference key="11">
    <citation type="journal article" date="2012" name="Angew. Chem. Int. Ed. Engl.">
        <title>Application of fragment screening and merging to the discovery of inhibitors of the Mycobacterium tuberculosis cytochrome P450 CYP121.</title>
        <authorList>
            <person name="Hudson S.A."/>
            <person name="McLean K.J."/>
            <person name="Surade S."/>
            <person name="Yang Y.Q."/>
            <person name="Leys D."/>
            <person name="Ciulli A."/>
            <person name="Munro A.W."/>
            <person name="Abell C."/>
        </authorList>
    </citation>
    <scope>X-RAY CRYSTALLOGRAPHY (1.24 ANGSTROMS) IN COMPLEX WITH HEME AND SUBSTRATE ANALOGS</scope>
    <scope>COFACTOR</scope>
</reference>
<reference key="12">
    <citation type="journal article" date="2013" name="J. Biol. Chem.">
        <title>Substrate and reaction specificity of Mycobacterium tuberculosis cytochrome P450 CYP121: insights from biochemical studies and crystal structures.</title>
        <authorList>
            <person name="Fonvielle M."/>
            <person name="Le Du M.H."/>
            <person name="Lequin O."/>
            <person name="Lecoq A."/>
            <person name="Jacquet M."/>
            <person name="Thai R."/>
            <person name="Dubois S."/>
            <person name="Grach G."/>
            <person name="Gondry M."/>
            <person name="Belin P."/>
        </authorList>
    </citation>
    <scope>X-RAY CRYSTALLOGRAPHY (1.20 ANGSTROMS) OF 2-396 IN COMPLEX WITH HEME AND SUBSTRATE ANALOGS</scope>
    <scope>SUBSTRATE SPECIFICITY</scope>
    <scope>COFACTOR</scope>
</reference>
<comment type="function">
    <text evidence="2 6 9">Catalyzes C-C bond formation between the carbons ortho to the phenolic hydroxyl of cyclo(L-tyr-L-tyr) (cYY) producing mycocyclosin. Can also use cyclo(L-Tyr-L-Phe) (cYF), cyclo(L-Tyr-L-Trp) (cYW) and cyclo(L-Tyr-L-3,4-dihydroxyphenylalanine) (cY-DOPA) as substrate.</text>
</comment>
<comment type="catalytic activity">
    <reaction evidence="6">
        <text>cyclo(L-tyrosyl-L-tyrosyl) + 2 reduced [2Fe-2S]-[ferredoxin] + O2 + 2 H(+) = mycoclysin + 2 oxidized [2Fe-2S]-[ferredoxin] + 2 H2O</text>
        <dbReference type="Rhea" id="RHEA:35547"/>
        <dbReference type="Rhea" id="RHEA-COMP:10000"/>
        <dbReference type="Rhea" id="RHEA-COMP:10001"/>
        <dbReference type="ChEBI" id="CHEBI:15377"/>
        <dbReference type="ChEBI" id="CHEBI:15378"/>
        <dbReference type="ChEBI" id="CHEBI:15379"/>
        <dbReference type="ChEBI" id="CHEBI:33737"/>
        <dbReference type="ChEBI" id="CHEBI:33738"/>
        <dbReference type="ChEBI" id="CHEBI:65063"/>
        <dbReference type="ChEBI" id="CHEBI:71596"/>
        <dbReference type="EC" id="1.14.19.70"/>
    </reaction>
</comment>
<comment type="cofactor">
    <cofactor evidence="2 3 4 5 6 7 8">
        <name>heme</name>
        <dbReference type="ChEBI" id="CHEBI:30413"/>
    </cofactor>
</comment>
<comment type="activity regulation">
    <text evidence="5">Inhibited by clotrimazole, econazole, ketoconazole, and miconazole.</text>
</comment>
<comment type="biophysicochemical properties">
    <kinetics>
        <KM evidence="6">21.3 uM for cYY (at pH7.2 and 30 degrees Celsius)</KM>
    </kinetics>
</comment>
<comment type="subcellular location">
    <subcellularLocation>
        <location evidence="1">Cytoplasm</location>
    </subcellularLocation>
</comment>
<comment type="mass spectrometry"/>
<comment type="miscellaneous">
    <text>Was identified as a high-confidence drug target.</text>
</comment>
<comment type="similarity">
    <text evidence="10">Belongs to the cytochrome P450 family.</text>
</comment>
<protein>
    <recommendedName>
        <fullName>Mycocyclosin synthase</fullName>
        <ecNumber evidence="6">1.14.19.70</ecNumber>
    </recommendedName>
    <alternativeName>
        <fullName>Cytochrome P450 121</fullName>
    </alternativeName>
    <alternativeName>
        <fullName>Cytochrome P450 MT2</fullName>
    </alternativeName>
</protein>
<evidence type="ECO:0000250" key="1"/>
<evidence type="ECO:0000269" key="2">
    <source>
    </source>
</evidence>
<evidence type="ECO:0000269" key="3">
    <source>
    </source>
</evidence>
<evidence type="ECO:0000269" key="4">
    <source>
    </source>
</evidence>
<evidence type="ECO:0000269" key="5">
    <source>
    </source>
</evidence>
<evidence type="ECO:0000269" key="6">
    <source>
    </source>
</evidence>
<evidence type="ECO:0000269" key="7">
    <source>
    </source>
</evidence>
<evidence type="ECO:0000269" key="8">
    <source>
    </source>
</evidence>
<evidence type="ECO:0000269" key="9">
    <source ref="2"/>
</evidence>
<evidence type="ECO:0000305" key="10"/>
<evidence type="ECO:0007829" key="11">
    <source>
        <dbReference type="PDB" id="1N40"/>
    </source>
</evidence>
<evidence type="ECO:0007829" key="12">
    <source>
        <dbReference type="PDB" id="2IJ5"/>
    </source>
</evidence>
<evidence type="ECO:0007829" key="13">
    <source>
        <dbReference type="PDB" id="2IJ7"/>
    </source>
</evidence>
<evidence type="ECO:0007829" key="14">
    <source>
        <dbReference type="PDB" id="5O4L"/>
    </source>
</evidence>